<comment type="function">
    <text evidence="1">As part of AP-5, a probable fifth adaptor protein complex it may be involved in endosomal transport.</text>
</comment>
<comment type="subunit">
    <text evidence="1">Probably part of the adaptor protein complex 5 (AP-5) a tetramer composed of AP5B1, AP5M1, AP5S1 and AP5Z1.</text>
</comment>
<comment type="subcellular location">
    <subcellularLocation>
        <location>Cytoplasm</location>
        <location>Cytosol</location>
    </subcellularLocation>
    <subcellularLocation>
        <location evidence="1">Late endosome membrane</location>
        <topology evidence="1">Peripheral membrane protein</topology>
        <orientation evidence="1">Cytoplasmic side</orientation>
    </subcellularLocation>
    <subcellularLocation>
        <location evidence="1">Lysosome membrane</location>
        <topology evidence="1">Peripheral membrane protein</topology>
        <orientation evidence="1">Cytoplasmic side</orientation>
    </subcellularLocation>
    <text evidence="1">May cycle on and off membranes.</text>
</comment>
<comment type="alternative products">
    <event type="alternative splicing"/>
    <isoform>
        <id>Q8BJ63-1</id>
        <name>1</name>
        <sequence type="displayed"/>
    </isoform>
    <isoform>
        <id>Q8BJ63-2</id>
        <name>2</name>
        <sequence type="described" ref="VSP_008411 VSP_008412"/>
    </isoform>
    <isoform>
        <id>Q8BJ63-3</id>
        <name>3</name>
        <sequence type="described" ref="VSP_008409 VSP_008410"/>
    </isoform>
</comment>
<comment type="tissue specificity">
    <text evidence="3">Widely expressed, including in small intestine and testis. In small intestine, highly expressed in cytoplasm of villi epithelial cells and internal glands. In testis, selectively expressed in maturing sperm cells (at protein level).</text>
</comment>
<comment type="miscellaneous">
    <molecule>Isoform 2</molecule>
    <text evidence="5">May be due to intron retention.</text>
</comment>
<comment type="miscellaneous">
    <molecule>Isoform 3</molecule>
    <text evidence="5">May be due to intron retention.</text>
</comment>
<comment type="similarity">
    <text evidence="5">Belongs to the adaptor complexes medium subunit family.</text>
</comment>
<protein>
    <recommendedName>
        <fullName>AP-5 complex subunit mu-1</fullName>
    </recommendedName>
    <alternativeName>
        <fullName>Adaptor-related protein complex 5 subunit mu-1</fullName>
        <shortName>Mu5</shortName>
    </alternativeName>
    <alternativeName>
        <fullName>Mu-2-related death-inducing protein</fullName>
        <shortName>MuD</shortName>
    </alternativeName>
</protein>
<accession>Q8BJ63</accession>
<accession>Q3TDF2</accession>
<accession>Q3TPT5</accession>
<accession>Q8BII2</accession>
<accession>Q8BJ31</accession>
<accession>Q8BJ58</accession>
<accession>Q8BY11</accession>
<accession>Q8R5B1</accession>
<sequence>MALRAVWLIRHEPGTPLGGTVRFSRRYPTVEKRAKAFNGMTYVPVPEDGPFLRALLFQLRLLDDDKDFMERRDGCSRINKTSIYGLSVGGEELWPVIAFLRDSMIYASVPLVEQALSPRPPLISISGVSQGLELLLGIQDFLYSSQKNDTDLHTKLSQLPDLLLQACPLGTLLDANLQNSLNSINSVSVTQPQKQPAWKVGAYKGKAQISISITETVKCMQYGKQDIADTWQVAGTVACKCDLEGVMPAVTISLSLPTNGSPLQDIIVHPCVTSLDSAILTSSSIDTMDDSAFSGPYKFPFTPPLESFNLCHYTSQVPVPPILGSYHMKEEGVQLKVTVNFKLHESVRNNFEVCEAHIPFYNRGPITHLEYKASFGQLEVFREKSLLVWIIGQKFPKSMEISLSGTLTFGVKGHNKQPFDHICIGNTAYIKLNFRIADYTLTGCYADQHSVQVFASGKPKISAYRKLISSDYYIWNSKAPAPVTYASLLP</sequence>
<evidence type="ECO:0000250" key="1"/>
<evidence type="ECO:0000255" key="2">
    <source>
        <dbReference type="PROSITE-ProRule" id="PRU00404"/>
    </source>
</evidence>
<evidence type="ECO:0000269" key="3">
    <source>
    </source>
</evidence>
<evidence type="ECO:0000303" key="4">
    <source>
    </source>
</evidence>
<evidence type="ECO:0000305" key="5"/>
<name>AP5M1_MOUSE</name>
<feature type="chain" id="PRO_0000193796" description="AP-5 complex subunit mu-1">
    <location>
        <begin position="1"/>
        <end position="490"/>
    </location>
</feature>
<feature type="domain" description="MHD" evidence="2">
    <location>
        <begin position="206"/>
        <end position="476"/>
    </location>
</feature>
<feature type="splice variant" id="VSP_008409" description="In isoform 3." evidence="4">
    <original>CDLEGVMPAVTISLSLPTNGSPLQDIIVHPCVTSLDSAILTSSSIDTMDDSAFSGPYKFPFTPPLES</original>
    <variation>VRFSPGFALSYHFTLKNSQFCNLYFTFLNGVLVILSNSHEILCYLSVFLTNCLFNDYNVMNHPIALK</variation>
    <location>
        <begin position="241"/>
        <end position="307"/>
    </location>
</feature>
<feature type="splice variant" id="VSP_008410" description="In isoform 3." evidence="4">
    <location>
        <begin position="308"/>
        <end position="490"/>
    </location>
</feature>
<feature type="splice variant" id="VSP_008411" description="In isoform 2." evidence="4">
    <original>QKFPKS</original>
    <variation>EYGFVY</variation>
    <location>
        <begin position="393"/>
        <end position="398"/>
    </location>
</feature>
<feature type="splice variant" id="VSP_008412" description="In isoform 2." evidence="4">
    <location>
        <begin position="399"/>
        <end position="490"/>
    </location>
</feature>
<feature type="sequence conflict" description="In Ref. 1; BAE41650/BAE32417 and 2; EDL20784." evidence="5" ref="1 2">
    <original>A</original>
    <variation>V</variation>
    <location>
        <position position="36"/>
    </location>
</feature>
<feature type="sequence conflict" description="In Ref. 1; BAE41650/BAE32417 and 2; EDL20784." evidence="5" ref="1 2">
    <original>V</original>
    <variation>I</variation>
    <location>
        <position position="45"/>
    </location>
</feature>
<feature type="sequence conflict" description="In Ref. 3; AAH23094." evidence="5" ref="3">
    <original>L</original>
    <variation>V</variation>
    <location>
        <position position="55"/>
    </location>
</feature>
<feature type="sequence conflict" description="In Ref. 3; AAH23094." evidence="5" ref="3">
    <original>S</original>
    <variation>K</variation>
    <location>
        <position position="157"/>
    </location>
</feature>
<feature type="sequence conflict" description="In Ref. 1; BAC27435/BAC34616/BAC27187/BAE37650." evidence="5" ref="1">
    <original>D</original>
    <variation>E</variation>
    <location>
        <position position="289"/>
    </location>
</feature>
<feature type="sequence conflict" description="In Ref. 1; BAC34616." evidence="5" ref="1">
    <original>K</original>
    <variation>N</variation>
    <location>
        <position position="416"/>
    </location>
</feature>
<gene>
    <name type="primary">Ap5m1</name>
    <name type="synonym">Mudeng</name>
</gene>
<dbReference type="EMBL" id="AK030928">
    <property type="protein sequence ID" value="BAC27187.1"/>
    <property type="molecule type" value="mRNA"/>
</dbReference>
<dbReference type="EMBL" id="AK031527">
    <property type="protein sequence ID" value="BAC27435.1"/>
    <property type="molecule type" value="mRNA"/>
</dbReference>
<dbReference type="EMBL" id="AK036465">
    <property type="protein sequence ID" value="BAC29441.1"/>
    <property type="molecule type" value="mRNA"/>
</dbReference>
<dbReference type="EMBL" id="AK042544">
    <property type="protein sequence ID" value="BAC31288.2"/>
    <property type="molecule type" value="mRNA"/>
</dbReference>
<dbReference type="EMBL" id="AK051372">
    <property type="protein sequence ID" value="BAC34616.1"/>
    <property type="molecule type" value="mRNA"/>
</dbReference>
<dbReference type="EMBL" id="AK154166">
    <property type="protein sequence ID" value="BAE32417.1"/>
    <property type="molecule type" value="mRNA"/>
</dbReference>
<dbReference type="EMBL" id="AK164148">
    <property type="protein sequence ID" value="BAE37650.1"/>
    <property type="molecule type" value="mRNA"/>
</dbReference>
<dbReference type="EMBL" id="AK170232">
    <property type="protein sequence ID" value="BAE41650.1"/>
    <property type="molecule type" value="mRNA"/>
</dbReference>
<dbReference type="EMBL" id="CH466605">
    <property type="protein sequence ID" value="EDL20784.1"/>
    <property type="molecule type" value="Genomic_DNA"/>
</dbReference>
<dbReference type="EMBL" id="BC023094">
    <property type="protein sequence ID" value="AAH23094.1"/>
    <property type="molecule type" value="mRNA"/>
</dbReference>
<dbReference type="CCDS" id="CCDS26995.1">
    <molecule id="Q8BJ63-1"/>
</dbReference>
<dbReference type="RefSeq" id="NP_653118.3">
    <property type="nucleotide sequence ID" value="NM_144535.4"/>
</dbReference>
<dbReference type="RefSeq" id="XP_006519685.1">
    <property type="nucleotide sequence ID" value="XM_006519622.3"/>
</dbReference>
<dbReference type="RefSeq" id="XP_006519686.1">
    <property type="nucleotide sequence ID" value="XM_006519623.3"/>
</dbReference>
<dbReference type="RefSeq" id="XP_011243514.1">
    <property type="nucleotide sequence ID" value="XM_011245212.2"/>
</dbReference>
<dbReference type="SMR" id="Q8BJ63"/>
<dbReference type="BioGRID" id="216709">
    <property type="interactions" value="1"/>
</dbReference>
<dbReference type="ComplexPortal" id="CPX-5182">
    <property type="entry name" value="AP-5 Adaptor complex"/>
</dbReference>
<dbReference type="FunCoup" id="Q8BJ63">
    <property type="interactions" value="2998"/>
</dbReference>
<dbReference type="STRING" id="10090.ENSMUSP00000046536"/>
<dbReference type="iPTMnet" id="Q8BJ63"/>
<dbReference type="PhosphoSitePlus" id="Q8BJ63"/>
<dbReference type="PaxDb" id="10090-ENSMUSP00000046536"/>
<dbReference type="PeptideAtlas" id="Q8BJ63"/>
<dbReference type="ProteomicsDB" id="296214">
    <molecule id="Q8BJ63-1"/>
</dbReference>
<dbReference type="ProteomicsDB" id="296215">
    <molecule id="Q8BJ63-2"/>
</dbReference>
<dbReference type="ProteomicsDB" id="296216">
    <molecule id="Q8BJ63-3"/>
</dbReference>
<dbReference type="Pumba" id="Q8BJ63"/>
<dbReference type="Antibodypedia" id="68208">
    <property type="antibodies" value="57 antibodies from 16 providers"/>
</dbReference>
<dbReference type="DNASU" id="74385"/>
<dbReference type="Ensembl" id="ENSMUST00000228238.2">
    <molecule id="Q8BJ63-3"/>
    <property type="protein sequence ID" value="ENSMUSP00000154186.2"/>
    <property type="gene ID" value="ENSMUSG00000036291.7"/>
</dbReference>
<dbReference type="GeneID" id="74385"/>
<dbReference type="KEGG" id="mmu:74385"/>
<dbReference type="UCSC" id="uc007tjx.2">
    <molecule id="Q8BJ63-3"/>
    <property type="organism name" value="mouse"/>
</dbReference>
<dbReference type="UCSC" id="uc007tjy.2">
    <molecule id="Q8BJ63-2"/>
    <property type="organism name" value="mouse"/>
</dbReference>
<dbReference type="UCSC" id="uc007tjz.2">
    <molecule id="Q8BJ63-1"/>
    <property type="organism name" value="mouse"/>
</dbReference>
<dbReference type="AGR" id="MGI:1921635"/>
<dbReference type="CTD" id="55745"/>
<dbReference type="MGI" id="MGI:1921635">
    <property type="gene designation" value="Ap5m1"/>
</dbReference>
<dbReference type="VEuPathDB" id="HostDB:ENSMUSG00000036291"/>
<dbReference type="eggNOG" id="KOG0937">
    <property type="taxonomic scope" value="Eukaryota"/>
</dbReference>
<dbReference type="GeneTree" id="ENSGT00390000006191"/>
<dbReference type="InParanoid" id="Q8BJ63"/>
<dbReference type="OrthoDB" id="1877176at2759"/>
<dbReference type="PhylomeDB" id="Q8BJ63"/>
<dbReference type="TreeFam" id="TF331963"/>
<dbReference type="BioGRID-ORCS" id="74385">
    <property type="hits" value="1 hit in 76 CRISPR screens"/>
</dbReference>
<dbReference type="ChiTaRS" id="Ap5m1">
    <property type="organism name" value="mouse"/>
</dbReference>
<dbReference type="PRO" id="PR:Q8BJ63"/>
<dbReference type="Proteomes" id="UP000000589">
    <property type="component" value="Chromosome 14"/>
</dbReference>
<dbReference type="RNAct" id="Q8BJ63">
    <property type="molecule type" value="protein"/>
</dbReference>
<dbReference type="Bgee" id="ENSMUSG00000036291">
    <property type="expression patterns" value="Expressed in paneth cell and 249 other cell types or tissues"/>
</dbReference>
<dbReference type="ExpressionAtlas" id="Q8BJ63">
    <property type="expression patterns" value="baseline and differential"/>
</dbReference>
<dbReference type="GO" id="GO:0044599">
    <property type="term" value="C:AP-5 adaptor complex"/>
    <property type="evidence" value="ECO:0000303"/>
    <property type="project" value="ComplexPortal"/>
</dbReference>
<dbReference type="GO" id="GO:0030119">
    <property type="term" value="C:AP-type membrane coat adaptor complex"/>
    <property type="evidence" value="ECO:0000250"/>
    <property type="project" value="UniProtKB"/>
</dbReference>
<dbReference type="GO" id="GO:0005829">
    <property type="term" value="C:cytosol"/>
    <property type="evidence" value="ECO:0000250"/>
    <property type="project" value="UniProtKB"/>
</dbReference>
<dbReference type="GO" id="GO:0005770">
    <property type="term" value="C:late endosome"/>
    <property type="evidence" value="ECO:0000250"/>
    <property type="project" value="UniProtKB"/>
</dbReference>
<dbReference type="GO" id="GO:0031902">
    <property type="term" value="C:late endosome membrane"/>
    <property type="evidence" value="ECO:0007669"/>
    <property type="project" value="UniProtKB-SubCell"/>
</dbReference>
<dbReference type="GO" id="GO:0005765">
    <property type="term" value="C:lysosomal membrane"/>
    <property type="evidence" value="ECO:0007669"/>
    <property type="project" value="UniProtKB-SubCell"/>
</dbReference>
<dbReference type="GO" id="GO:0005764">
    <property type="term" value="C:lysosome"/>
    <property type="evidence" value="ECO:0000250"/>
    <property type="project" value="UniProtKB"/>
</dbReference>
<dbReference type="GO" id="GO:0016020">
    <property type="term" value="C:membrane"/>
    <property type="evidence" value="ECO:0000250"/>
    <property type="project" value="UniProtKB"/>
</dbReference>
<dbReference type="GO" id="GO:0016197">
    <property type="term" value="P:endosomal transport"/>
    <property type="evidence" value="ECO:0000250"/>
    <property type="project" value="UniProtKB"/>
</dbReference>
<dbReference type="GO" id="GO:0015031">
    <property type="term" value="P:protein transport"/>
    <property type="evidence" value="ECO:0007669"/>
    <property type="project" value="UniProtKB-KW"/>
</dbReference>
<dbReference type="GO" id="GO:0016192">
    <property type="term" value="P:vesicle-mediated transport"/>
    <property type="evidence" value="ECO:0000303"/>
    <property type="project" value="ComplexPortal"/>
</dbReference>
<dbReference type="CDD" id="cd09256">
    <property type="entry name" value="AP_MuD_MHD"/>
    <property type="match status" value="1"/>
</dbReference>
<dbReference type="FunFam" id="2.60.40.1170:FF:000014">
    <property type="entry name" value="AP-5 complex subunit mu-1 isoform X1"/>
    <property type="match status" value="1"/>
</dbReference>
<dbReference type="Gene3D" id="2.60.40.1170">
    <property type="entry name" value="Mu homology domain, subdomain B"/>
    <property type="match status" value="2"/>
</dbReference>
<dbReference type="InterPro" id="IPR036168">
    <property type="entry name" value="AP2_Mu_C_sf"/>
</dbReference>
<dbReference type="InterPro" id="IPR039591">
    <property type="entry name" value="AP5M1"/>
</dbReference>
<dbReference type="InterPro" id="IPR028565">
    <property type="entry name" value="MHD"/>
</dbReference>
<dbReference type="PANTHER" id="PTHR16082">
    <property type="entry name" value="AP-5 COMPLEX SUBUNIT MU-1"/>
    <property type="match status" value="1"/>
</dbReference>
<dbReference type="PANTHER" id="PTHR16082:SF2">
    <property type="entry name" value="AP-5 COMPLEX SUBUNIT MU-1"/>
    <property type="match status" value="1"/>
</dbReference>
<dbReference type="Pfam" id="PF00928">
    <property type="entry name" value="Adap_comp_sub"/>
    <property type="match status" value="1"/>
</dbReference>
<dbReference type="SUPFAM" id="SSF49447">
    <property type="entry name" value="Second domain of Mu2 adaptin subunit (ap50) of ap2 adaptor"/>
    <property type="match status" value="1"/>
</dbReference>
<dbReference type="PROSITE" id="PS51072">
    <property type="entry name" value="MHD"/>
    <property type="match status" value="1"/>
</dbReference>
<reference key="1">
    <citation type="journal article" date="2005" name="Science">
        <title>The transcriptional landscape of the mammalian genome.</title>
        <authorList>
            <person name="Carninci P."/>
            <person name="Kasukawa T."/>
            <person name="Katayama S."/>
            <person name="Gough J."/>
            <person name="Frith M.C."/>
            <person name="Maeda N."/>
            <person name="Oyama R."/>
            <person name="Ravasi T."/>
            <person name="Lenhard B."/>
            <person name="Wells C."/>
            <person name="Kodzius R."/>
            <person name="Shimokawa K."/>
            <person name="Bajic V.B."/>
            <person name="Brenner S.E."/>
            <person name="Batalov S."/>
            <person name="Forrest A.R."/>
            <person name="Zavolan M."/>
            <person name="Davis M.J."/>
            <person name="Wilming L.G."/>
            <person name="Aidinis V."/>
            <person name="Allen J.E."/>
            <person name="Ambesi-Impiombato A."/>
            <person name="Apweiler R."/>
            <person name="Aturaliya R.N."/>
            <person name="Bailey T.L."/>
            <person name="Bansal M."/>
            <person name="Baxter L."/>
            <person name="Beisel K.W."/>
            <person name="Bersano T."/>
            <person name="Bono H."/>
            <person name="Chalk A.M."/>
            <person name="Chiu K.P."/>
            <person name="Choudhary V."/>
            <person name="Christoffels A."/>
            <person name="Clutterbuck D.R."/>
            <person name="Crowe M.L."/>
            <person name="Dalla E."/>
            <person name="Dalrymple B.P."/>
            <person name="de Bono B."/>
            <person name="Della Gatta G."/>
            <person name="di Bernardo D."/>
            <person name="Down T."/>
            <person name="Engstrom P."/>
            <person name="Fagiolini M."/>
            <person name="Faulkner G."/>
            <person name="Fletcher C.F."/>
            <person name="Fukushima T."/>
            <person name="Furuno M."/>
            <person name="Futaki S."/>
            <person name="Gariboldi M."/>
            <person name="Georgii-Hemming P."/>
            <person name="Gingeras T.R."/>
            <person name="Gojobori T."/>
            <person name="Green R.E."/>
            <person name="Gustincich S."/>
            <person name="Harbers M."/>
            <person name="Hayashi Y."/>
            <person name="Hensch T.K."/>
            <person name="Hirokawa N."/>
            <person name="Hill D."/>
            <person name="Huminiecki L."/>
            <person name="Iacono M."/>
            <person name="Ikeo K."/>
            <person name="Iwama A."/>
            <person name="Ishikawa T."/>
            <person name="Jakt M."/>
            <person name="Kanapin A."/>
            <person name="Katoh M."/>
            <person name="Kawasawa Y."/>
            <person name="Kelso J."/>
            <person name="Kitamura H."/>
            <person name="Kitano H."/>
            <person name="Kollias G."/>
            <person name="Krishnan S.P."/>
            <person name="Kruger A."/>
            <person name="Kummerfeld S.K."/>
            <person name="Kurochkin I.V."/>
            <person name="Lareau L.F."/>
            <person name="Lazarevic D."/>
            <person name="Lipovich L."/>
            <person name="Liu J."/>
            <person name="Liuni S."/>
            <person name="McWilliam S."/>
            <person name="Madan Babu M."/>
            <person name="Madera M."/>
            <person name="Marchionni L."/>
            <person name="Matsuda H."/>
            <person name="Matsuzawa S."/>
            <person name="Miki H."/>
            <person name="Mignone F."/>
            <person name="Miyake S."/>
            <person name="Morris K."/>
            <person name="Mottagui-Tabar S."/>
            <person name="Mulder N."/>
            <person name="Nakano N."/>
            <person name="Nakauchi H."/>
            <person name="Ng P."/>
            <person name="Nilsson R."/>
            <person name="Nishiguchi S."/>
            <person name="Nishikawa S."/>
            <person name="Nori F."/>
            <person name="Ohara O."/>
            <person name="Okazaki Y."/>
            <person name="Orlando V."/>
            <person name="Pang K.C."/>
            <person name="Pavan W.J."/>
            <person name="Pavesi G."/>
            <person name="Pesole G."/>
            <person name="Petrovsky N."/>
            <person name="Piazza S."/>
            <person name="Reed J."/>
            <person name="Reid J.F."/>
            <person name="Ring B.Z."/>
            <person name="Ringwald M."/>
            <person name="Rost B."/>
            <person name="Ruan Y."/>
            <person name="Salzberg S.L."/>
            <person name="Sandelin A."/>
            <person name="Schneider C."/>
            <person name="Schoenbach C."/>
            <person name="Sekiguchi K."/>
            <person name="Semple C.A."/>
            <person name="Seno S."/>
            <person name="Sessa L."/>
            <person name="Sheng Y."/>
            <person name="Shibata Y."/>
            <person name="Shimada H."/>
            <person name="Shimada K."/>
            <person name="Silva D."/>
            <person name="Sinclair B."/>
            <person name="Sperling S."/>
            <person name="Stupka E."/>
            <person name="Sugiura K."/>
            <person name="Sultana R."/>
            <person name="Takenaka Y."/>
            <person name="Taki K."/>
            <person name="Tammoja K."/>
            <person name="Tan S.L."/>
            <person name="Tang S."/>
            <person name="Taylor M.S."/>
            <person name="Tegner J."/>
            <person name="Teichmann S.A."/>
            <person name="Ueda H.R."/>
            <person name="van Nimwegen E."/>
            <person name="Verardo R."/>
            <person name="Wei C.L."/>
            <person name="Yagi K."/>
            <person name="Yamanishi H."/>
            <person name="Zabarovsky E."/>
            <person name="Zhu S."/>
            <person name="Zimmer A."/>
            <person name="Hide W."/>
            <person name="Bult C."/>
            <person name="Grimmond S.M."/>
            <person name="Teasdale R.D."/>
            <person name="Liu E.T."/>
            <person name="Brusic V."/>
            <person name="Quackenbush J."/>
            <person name="Wahlestedt C."/>
            <person name="Mattick J.S."/>
            <person name="Hume D.A."/>
            <person name="Kai C."/>
            <person name="Sasaki D."/>
            <person name="Tomaru Y."/>
            <person name="Fukuda S."/>
            <person name="Kanamori-Katayama M."/>
            <person name="Suzuki M."/>
            <person name="Aoki J."/>
            <person name="Arakawa T."/>
            <person name="Iida J."/>
            <person name="Imamura K."/>
            <person name="Itoh M."/>
            <person name="Kato T."/>
            <person name="Kawaji H."/>
            <person name="Kawagashira N."/>
            <person name="Kawashima T."/>
            <person name="Kojima M."/>
            <person name="Kondo S."/>
            <person name="Konno H."/>
            <person name="Nakano K."/>
            <person name="Ninomiya N."/>
            <person name="Nishio T."/>
            <person name="Okada M."/>
            <person name="Plessy C."/>
            <person name="Shibata K."/>
            <person name="Shiraki T."/>
            <person name="Suzuki S."/>
            <person name="Tagami M."/>
            <person name="Waki K."/>
            <person name="Watahiki A."/>
            <person name="Okamura-Oho Y."/>
            <person name="Suzuki H."/>
            <person name="Kawai J."/>
            <person name="Hayashizaki Y."/>
        </authorList>
    </citation>
    <scope>NUCLEOTIDE SEQUENCE [LARGE SCALE MRNA] (ISOFORMS 1; 2 AND 3)</scope>
    <source>
        <strain>C57BL/6J</strain>
        <strain>NOD</strain>
        <tissue>Bone</tissue>
        <tissue>Cerebellum</tissue>
        <tissue>Dendritic cell</tissue>
        <tissue>Embryonic spinal ganglion</tissue>
        <tissue>Embryonic testis</tissue>
        <tissue>Hippocampus</tissue>
        <tissue>Thymus</tissue>
    </source>
</reference>
<reference key="2">
    <citation type="submission" date="2005-07" db="EMBL/GenBank/DDBJ databases">
        <authorList>
            <person name="Mural R.J."/>
            <person name="Adams M.D."/>
            <person name="Myers E.W."/>
            <person name="Smith H.O."/>
            <person name="Venter J.C."/>
        </authorList>
    </citation>
    <scope>NUCLEOTIDE SEQUENCE [LARGE SCALE GENOMIC DNA]</scope>
</reference>
<reference key="3">
    <citation type="journal article" date="2004" name="Genome Res.">
        <title>The status, quality, and expansion of the NIH full-length cDNA project: the Mammalian Gene Collection (MGC).</title>
        <authorList>
            <consortium name="The MGC Project Team"/>
        </authorList>
    </citation>
    <scope>NUCLEOTIDE SEQUENCE [LARGE SCALE MRNA] (ISOFORM 1)</scope>
    <source>
        <strain>Czech II</strain>
        <tissue>Mammary gland</tissue>
    </source>
</reference>
<reference key="4">
    <citation type="journal article" date="2008" name="Biochem. Biophys. Res. Commun.">
        <title>A novel protein, MUDENG, induces cell death in cytotoxic T cells.</title>
        <authorList>
            <person name="Lee M.-R."/>
            <person name="Shin J.N."/>
            <person name="Moon A.R."/>
            <person name="Park S.-Y."/>
            <person name="Hong G."/>
            <person name="Lee M.-J."/>
            <person name="Yun C.-W."/>
            <person name="Seol D.-W."/>
            <person name="Piya S."/>
            <person name="Bae J."/>
            <person name="Oh J.-W."/>
            <person name="Kim T.-H."/>
        </authorList>
    </citation>
    <scope>TISSUE SPECIFICITY</scope>
</reference>
<keyword id="KW-0025">Alternative splicing</keyword>
<keyword id="KW-0963">Cytoplasm</keyword>
<keyword id="KW-0967">Endosome</keyword>
<keyword id="KW-0458">Lysosome</keyword>
<keyword id="KW-0472">Membrane</keyword>
<keyword id="KW-0653">Protein transport</keyword>
<keyword id="KW-1185">Reference proteome</keyword>
<keyword id="KW-0813">Transport</keyword>
<organism>
    <name type="scientific">Mus musculus</name>
    <name type="common">Mouse</name>
    <dbReference type="NCBI Taxonomy" id="10090"/>
    <lineage>
        <taxon>Eukaryota</taxon>
        <taxon>Metazoa</taxon>
        <taxon>Chordata</taxon>
        <taxon>Craniata</taxon>
        <taxon>Vertebrata</taxon>
        <taxon>Euteleostomi</taxon>
        <taxon>Mammalia</taxon>
        <taxon>Eutheria</taxon>
        <taxon>Euarchontoglires</taxon>
        <taxon>Glires</taxon>
        <taxon>Rodentia</taxon>
        <taxon>Myomorpha</taxon>
        <taxon>Muroidea</taxon>
        <taxon>Muridae</taxon>
        <taxon>Murinae</taxon>
        <taxon>Mus</taxon>
        <taxon>Mus</taxon>
    </lineage>
</organism>
<proteinExistence type="evidence at protein level"/>